<reference key="1">
    <citation type="journal article" date="1998" name="Science">
        <title>Genome sequence of the nematode C. elegans: a platform for investigating biology.</title>
        <authorList>
            <consortium name="The C. elegans sequencing consortium"/>
        </authorList>
    </citation>
    <scope>NUCLEOTIDE SEQUENCE [LARGE SCALE GENOMIC DNA]</scope>
    <source>
        <strain>Bristol N2</strain>
    </source>
</reference>
<feature type="chain" id="PRO_0000065407" description="Uncharacterized protein K10D2.5">
    <location>
        <begin position="1"/>
        <end position="118"/>
    </location>
</feature>
<protein>
    <recommendedName>
        <fullName>Uncharacterized protein K10D2.5</fullName>
    </recommendedName>
</protein>
<keyword id="KW-1185">Reference proteome</keyword>
<accession>Q09411</accession>
<proteinExistence type="predicted"/>
<dbReference type="EMBL" id="FO081618">
    <property type="protein sequence ID" value="CCD72860.1"/>
    <property type="molecule type" value="Genomic_DNA"/>
</dbReference>
<dbReference type="PIR" id="A88451">
    <property type="entry name" value="A88451"/>
</dbReference>
<dbReference type="RefSeq" id="NP_498097.1">
    <property type="nucleotide sequence ID" value="NM_065696.5"/>
</dbReference>
<dbReference type="SMR" id="Q09411"/>
<dbReference type="BioGRID" id="40937">
    <property type="interactions" value="2"/>
</dbReference>
<dbReference type="FunCoup" id="Q09411">
    <property type="interactions" value="1357"/>
</dbReference>
<dbReference type="STRING" id="6239.K10D2.5.1"/>
<dbReference type="PaxDb" id="6239-K10D2.5"/>
<dbReference type="PeptideAtlas" id="Q09411"/>
<dbReference type="EnsemblMetazoa" id="K10D2.5.1">
    <property type="protein sequence ID" value="K10D2.5.1"/>
    <property type="gene ID" value="WBGene00019631"/>
</dbReference>
<dbReference type="GeneID" id="175706"/>
<dbReference type="KEGG" id="cel:CELE_K10D2.5"/>
<dbReference type="UCSC" id="K10D2.5">
    <property type="organism name" value="c. elegans"/>
</dbReference>
<dbReference type="AGR" id="WB:WBGene00019631"/>
<dbReference type="CTD" id="175706"/>
<dbReference type="WormBase" id="K10D2.5">
    <property type="protein sequence ID" value="CE02017"/>
    <property type="gene ID" value="WBGene00019631"/>
</dbReference>
<dbReference type="eggNOG" id="ENOG502TI3X">
    <property type="taxonomic scope" value="Eukaryota"/>
</dbReference>
<dbReference type="HOGENOM" id="CLU_137540_0_0_1"/>
<dbReference type="InParanoid" id="Q09411"/>
<dbReference type="OMA" id="PICARKY"/>
<dbReference type="OrthoDB" id="5785648at2759"/>
<dbReference type="PRO" id="PR:Q09411"/>
<dbReference type="Proteomes" id="UP000001940">
    <property type="component" value="Chromosome III"/>
</dbReference>
<dbReference type="Bgee" id="WBGene00019631">
    <property type="expression patterns" value="Expressed in germ line (C elegans) and 4 other cell types or tissues"/>
</dbReference>
<dbReference type="InterPro" id="IPR036400">
    <property type="entry name" value="Cyt_B5-like_heme/steroid_sf"/>
</dbReference>
<dbReference type="SUPFAM" id="SSF55856">
    <property type="entry name" value="Cytochrome b5-like heme/steroid binding domain"/>
    <property type="match status" value="1"/>
</dbReference>
<sequence>MQIGEYELTFIDVAVFVVFLVALNKIVKRMLVAKINEPAKYEIEQLEERDMTMEEIESMRREENRCLVIVEDKIYDLSGSQDLYDNNRDLFESSEGCGPEWAPICARKYPFVGHVLKN</sequence>
<name>YRJ5_CAEEL</name>
<organism>
    <name type="scientific">Caenorhabditis elegans</name>
    <dbReference type="NCBI Taxonomy" id="6239"/>
    <lineage>
        <taxon>Eukaryota</taxon>
        <taxon>Metazoa</taxon>
        <taxon>Ecdysozoa</taxon>
        <taxon>Nematoda</taxon>
        <taxon>Chromadorea</taxon>
        <taxon>Rhabditida</taxon>
        <taxon>Rhabditina</taxon>
        <taxon>Rhabditomorpha</taxon>
        <taxon>Rhabditoidea</taxon>
        <taxon>Rhabditidae</taxon>
        <taxon>Peloderinae</taxon>
        <taxon>Caenorhabditis</taxon>
    </lineage>
</organism>
<gene>
    <name type="ORF">K10D2.5</name>
</gene>